<sequence>MSNKTAKNIRPGELNLKEKLVHINRTAKVVKGGKRFGFNAIVVVGDKEGHVGYGLGKANEVQDAIAKGVEDGKKNVVKVPIVKGTIPHQVVAKYGSAKVLMKPATPGTGLIAGGAVRAVLEMAGIHDILTKSLGSSNPHNVVKAAIKGLESMSDAYEVGERRSKNLKEVFES</sequence>
<comment type="function">
    <text evidence="1">With S4 and S12 plays an important role in translational accuracy.</text>
</comment>
<comment type="function">
    <text evidence="1">Located at the back of the 30S subunit body where it stabilizes the conformation of the head with respect to the body.</text>
</comment>
<comment type="subunit">
    <text evidence="1">Part of the 30S ribosomal subunit. Contacts proteins S4 and S8.</text>
</comment>
<comment type="domain">
    <text>The N-terminal domain interacts with the head of the 30S subunit; the C-terminal domain interacts with the body and contacts protein S4. The interaction surface between S4 and S5 is involved in control of translational fidelity.</text>
</comment>
<comment type="similarity">
    <text evidence="1">Belongs to the universal ribosomal protein uS5 family.</text>
</comment>
<reference key="1">
    <citation type="submission" date="2008-06" db="EMBL/GenBank/DDBJ databases">
        <title>Complete sequence of chromosome of Prosthecochloris aestuarii DSM 271.</title>
        <authorList>
            <consortium name="US DOE Joint Genome Institute"/>
            <person name="Lucas S."/>
            <person name="Copeland A."/>
            <person name="Lapidus A."/>
            <person name="Glavina del Rio T."/>
            <person name="Dalin E."/>
            <person name="Tice H."/>
            <person name="Bruce D."/>
            <person name="Goodwin L."/>
            <person name="Pitluck S."/>
            <person name="Schmutz J."/>
            <person name="Larimer F."/>
            <person name="Land M."/>
            <person name="Hauser L."/>
            <person name="Kyrpides N."/>
            <person name="Anderson I."/>
            <person name="Liu Z."/>
            <person name="Li T."/>
            <person name="Zhao F."/>
            <person name="Overmann J."/>
            <person name="Bryant D.A."/>
            <person name="Richardson P."/>
        </authorList>
    </citation>
    <scope>NUCLEOTIDE SEQUENCE [LARGE SCALE GENOMIC DNA]</scope>
    <source>
        <strain>DSM 271 / SK 413</strain>
    </source>
</reference>
<dbReference type="EMBL" id="CP001108">
    <property type="protein sequence ID" value="ACF47057.1"/>
    <property type="molecule type" value="Genomic_DNA"/>
</dbReference>
<dbReference type="RefSeq" id="WP_012506589.1">
    <property type="nucleotide sequence ID" value="NC_011059.1"/>
</dbReference>
<dbReference type="SMR" id="B4S5B1"/>
<dbReference type="STRING" id="290512.Paes_2047"/>
<dbReference type="KEGG" id="paa:Paes_2047"/>
<dbReference type="eggNOG" id="COG0098">
    <property type="taxonomic scope" value="Bacteria"/>
</dbReference>
<dbReference type="HOGENOM" id="CLU_065898_2_2_10"/>
<dbReference type="Proteomes" id="UP000002725">
    <property type="component" value="Chromosome"/>
</dbReference>
<dbReference type="GO" id="GO:0015935">
    <property type="term" value="C:small ribosomal subunit"/>
    <property type="evidence" value="ECO:0007669"/>
    <property type="project" value="InterPro"/>
</dbReference>
<dbReference type="GO" id="GO:0019843">
    <property type="term" value="F:rRNA binding"/>
    <property type="evidence" value="ECO:0007669"/>
    <property type="project" value="UniProtKB-UniRule"/>
</dbReference>
<dbReference type="GO" id="GO:0003735">
    <property type="term" value="F:structural constituent of ribosome"/>
    <property type="evidence" value="ECO:0007669"/>
    <property type="project" value="InterPro"/>
</dbReference>
<dbReference type="GO" id="GO:0006412">
    <property type="term" value="P:translation"/>
    <property type="evidence" value="ECO:0007669"/>
    <property type="project" value="UniProtKB-UniRule"/>
</dbReference>
<dbReference type="FunFam" id="3.30.160.20:FF:000001">
    <property type="entry name" value="30S ribosomal protein S5"/>
    <property type="match status" value="1"/>
</dbReference>
<dbReference type="FunFam" id="3.30.230.10:FF:000002">
    <property type="entry name" value="30S ribosomal protein S5"/>
    <property type="match status" value="1"/>
</dbReference>
<dbReference type="Gene3D" id="3.30.160.20">
    <property type="match status" value="1"/>
</dbReference>
<dbReference type="Gene3D" id="3.30.230.10">
    <property type="match status" value="1"/>
</dbReference>
<dbReference type="HAMAP" id="MF_01307_B">
    <property type="entry name" value="Ribosomal_uS5_B"/>
    <property type="match status" value="1"/>
</dbReference>
<dbReference type="InterPro" id="IPR020568">
    <property type="entry name" value="Ribosomal_Su5_D2-typ_SF"/>
</dbReference>
<dbReference type="InterPro" id="IPR000851">
    <property type="entry name" value="Ribosomal_uS5"/>
</dbReference>
<dbReference type="InterPro" id="IPR005712">
    <property type="entry name" value="Ribosomal_uS5_bac-type"/>
</dbReference>
<dbReference type="InterPro" id="IPR005324">
    <property type="entry name" value="Ribosomal_uS5_C"/>
</dbReference>
<dbReference type="InterPro" id="IPR013810">
    <property type="entry name" value="Ribosomal_uS5_N"/>
</dbReference>
<dbReference type="InterPro" id="IPR018192">
    <property type="entry name" value="Ribosomal_uS5_N_CS"/>
</dbReference>
<dbReference type="InterPro" id="IPR014721">
    <property type="entry name" value="Ribsml_uS5_D2-typ_fold_subgr"/>
</dbReference>
<dbReference type="NCBIfam" id="TIGR01021">
    <property type="entry name" value="rpsE_bact"/>
    <property type="match status" value="1"/>
</dbReference>
<dbReference type="PANTHER" id="PTHR48277">
    <property type="entry name" value="MITOCHONDRIAL RIBOSOMAL PROTEIN S5"/>
    <property type="match status" value="1"/>
</dbReference>
<dbReference type="PANTHER" id="PTHR48277:SF1">
    <property type="entry name" value="MITOCHONDRIAL RIBOSOMAL PROTEIN S5"/>
    <property type="match status" value="1"/>
</dbReference>
<dbReference type="Pfam" id="PF00333">
    <property type="entry name" value="Ribosomal_S5"/>
    <property type="match status" value="1"/>
</dbReference>
<dbReference type="Pfam" id="PF03719">
    <property type="entry name" value="Ribosomal_S5_C"/>
    <property type="match status" value="1"/>
</dbReference>
<dbReference type="SUPFAM" id="SSF54768">
    <property type="entry name" value="dsRNA-binding domain-like"/>
    <property type="match status" value="1"/>
</dbReference>
<dbReference type="SUPFAM" id="SSF54211">
    <property type="entry name" value="Ribosomal protein S5 domain 2-like"/>
    <property type="match status" value="1"/>
</dbReference>
<dbReference type="PROSITE" id="PS00585">
    <property type="entry name" value="RIBOSOMAL_S5"/>
    <property type="match status" value="1"/>
</dbReference>
<dbReference type="PROSITE" id="PS50881">
    <property type="entry name" value="S5_DSRBD"/>
    <property type="match status" value="1"/>
</dbReference>
<organism>
    <name type="scientific">Prosthecochloris aestuarii (strain DSM 271 / SK 413)</name>
    <dbReference type="NCBI Taxonomy" id="290512"/>
    <lineage>
        <taxon>Bacteria</taxon>
        <taxon>Pseudomonadati</taxon>
        <taxon>Chlorobiota</taxon>
        <taxon>Chlorobiia</taxon>
        <taxon>Chlorobiales</taxon>
        <taxon>Chlorobiaceae</taxon>
        <taxon>Prosthecochloris</taxon>
    </lineage>
</organism>
<evidence type="ECO:0000255" key="1">
    <source>
        <dbReference type="HAMAP-Rule" id="MF_01307"/>
    </source>
</evidence>
<evidence type="ECO:0000305" key="2"/>
<name>RS5_PROA2</name>
<keyword id="KW-0687">Ribonucleoprotein</keyword>
<keyword id="KW-0689">Ribosomal protein</keyword>
<keyword id="KW-0694">RNA-binding</keyword>
<keyword id="KW-0699">rRNA-binding</keyword>
<accession>B4S5B1</accession>
<gene>
    <name evidence="1" type="primary">rpsE</name>
    <name type="ordered locus">Paes_2047</name>
</gene>
<proteinExistence type="inferred from homology"/>
<protein>
    <recommendedName>
        <fullName evidence="1">Small ribosomal subunit protein uS5</fullName>
    </recommendedName>
    <alternativeName>
        <fullName evidence="2">30S ribosomal protein S5</fullName>
    </alternativeName>
</protein>
<feature type="chain" id="PRO_1000140881" description="Small ribosomal subunit protein uS5">
    <location>
        <begin position="1"/>
        <end position="172"/>
    </location>
</feature>
<feature type="domain" description="S5 DRBM" evidence="1">
    <location>
        <begin position="16"/>
        <end position="79"/>
    </location>
</feature>